<gene>
    <name evidence="1" type="primary">groES</name>
    <name evidence="1" type="synonym">groS</name>
    <name type="ordered locus">YPTS_0430</name>
</gene>
<protein>
    <recommendedName>
        <fullName evidence="1">Co-chaperonin GroES</fullName>
    </recommendedName>
    <alternativeName>
        <fullName evidence="1">10 kDa chaperonin</fullName>
    </alternativeName>
    <alternativeName>
        <fullName evidence="1">Chaperonin-10</fullName>
        <shortName evidence="1">Cpn10</shortName>
    </alternativeName>
</protein>
<feature type="chain" id="PRO_1000129729" description="Co-chaperonin GroES">
    <location>
        <begin position="1"/>
        <end position="97"/>
    </location>
</feature>
<comment type="function">
    <text evidence="1">Together with the chaperonin GroEL, plays an essential role in assisting protein folding. The GroEL-GroES system forms a nano-cage that allows encapsulation of the non-native substrate proteins and provides a physical environment optimized to promote and accelerate protein folding. GroES binds to the apical surface of the GroEL ring, thereby capping the opening of the GroEL channel.</text>
</comment>
<comment type="subunit">
    <text evidence="1">Heptamer of 7 subunits arranged in a ring. Interacts with the chaperonin GroEL.</text>
</comment>
<comment type="subcellular location">
    <subcellularLocation>
        <location evidence="1">Cytoplasm</location>
    </subcellularLocation>
</comment>
<comment type="similarity">
    <text evidence="1">Belongs to the GroES chaperonin family.</text>
</comment>
<keyword id="KW-0143">Chaperone</keyword>
<keyword id="KW-0963">Cytoplasm</keyword>
<dbReference type="EMBL" id="CP001048">
    <property type="protein sequence ID" value="ACC87418.1"/>
    <property type="molecule type" value="Genomic_DNA"/>
</dbReference>
<dbReference type="RefSeq" id="WP_002209127.1">
    <property type="nucleotide sequence ID" value="NZ_CP009780.1"/>
</dbReference>
<dbReference type="SMR" id="B2K1Y3"/>
<dbReference type="KEGG" id="ypb:YPTS_0430"/>
<dbReference type="PATRIC" id="fig|502801.10.peg.4105"/>
<dbReference type="GO" id="GO:0005737">
    <property type="term" value="C:cytoplasm"/>
    <property type="evidence" value="ECO:0007669"/>
    <property type="project" value="UniProtKB-SubCell"/>
</dbReference>
<dbReference type="GO" id="GO:0005524">
    <property type="term" value="F:ATP binding"/>
    <property type="evidence" value="ECO:0007669"/>
    <property type="project" value="InterPro"/>
</dbReference>
<dbReference type="GO" id="GO:0046872">
    <property type="term" value="F:metal ion binding"/>
    <property type="evidence" value="ECO:0007669"/>
    <property type="project" value="TreeGrafter"/>
</dbReference>
<dbReference type="GO" id="GO:0044183">
    <property type="term" value="F:protein folding chaperone"/>
    <property type="evidence" value="ECO:0007669"/>
    <property type="project" value="InterPro"/>
</dbReference>
<dbReference type="GO" id="GO:0051087">
    <property type="term" value="F:protein-folding chaperone binding"/>
    <property type="evidence" value="ECO:0007669"/>
    <property type="project" value="TreeGrafter"/>
</dbReference>
<dbReference type="GO" id="GO:0051082">
    <property type="term" value="F:unfolded protein binding"/>
    <property type="evidence" value="ECO:0007669"/>
    <property type="project" value="TreeGrafter"/>
</dbReference>
<dbReference type="GO" id="GO:0051085">
    <property type="term" value="P:chaperone cofactor-dependent protein refolding"/>
    <property type="evidence" value="ECO:0007669"/>
    <property type="project" value="TreeGrafter"/>
</dbReference>
<dbReference type="CDD" id="cd00320">
    <property type="entry name" value="cpn10"/>
    <property type="match status" value="1"/>
</dbReference>
<dbReference type="FunFam" id="2.30.33.40:FF:000001">
    <property type="entry name" value="10 kDa chaperonin"/>
    <property type="match status" value="1"/>
</dbReference>
<dbReference type="Gene3D" id="2.30.33.40">
    <property type="entry name" value="GroES chaperonin"/>
    <property type="match status" value="1"/>
</dbReference>
<dbReference type="HAMAP" id="MF_00580">
    <property type="entry name" value="CH10"/>
    <property type="match status" value="1"/>
</dbReference>
<dbReference type="InterPro" id="IPR020818">
    <property type="entry name" value="Chaperonin_GroES"/>
</dbReference>
<dbReference type="InterPro" id="IPR037124">
    <property type="entry name" value="Chaperonin_GroES_sf"/>
</dbReference>
<dbReference type="InterPro" id="IPR018369">
    <property type="entry name" value="Chaprnonin_Cpn10_CS"/>
</dbReference>
<dbReference type="InterPro" id="IPR011032">
    <property type="entry name" value="GroES-like_sf"/>
</dbReference>
<dbReference type="NCBIfam" id="NF001526">
    <property type="entry name" value="PRK00364.1-1"/>
    <property type="match status" value="1"/>
</dbReference>
<dbReference type="NCBIfam" id="NF001527">
    <property type="entry name" value="PRK00364.1-2"/>
    <property type="match status" value="1"/>
</dbReference>
<dbReference type="NCBIfam" id="NF001531">
    <property type="entry name" value="PRK00364.2-2"/>
    <property type="match status" value="1"/>
</dbReference>
<dbReference type="PANTHER" id="PTHR10772">
    <property type="entry name" value="10 KDA HEAT SHOCK PROTEIN"/>
    <property type="match status" value="1"/>
</dbReference>
<dbReference type="PANTHER" id="PTHR10772:SF58">
    <property type="entry name" value="CO-CHAPERONIN GROES"/>
    <property type="match status" value="1"/>
</dbReference>
<dbReference type="Pfam" id="PF00166">
    <property type="entry name" value="Cpn10"/>
    <property type="match status" value="1"/>
</dbReference>
<dbReference type="PRINTS" id="PR00297">
    <property type="entry name" value="CHAPERONIN10"/>
</dbReference>
<dbReference type="SMART" id="SM00883">
    <property type="entry name" value="Cpn10"/>
    <property type="match status" value="1"/>
</dbReference>
<dbReference type="SUPFAM" id="SSF50129">
    <property type="entry name" value="GroES-like"/>
    <property type="match status" value="1"/>
</dbReference>
<dbReference type="PROSITE" id="PS00681">
    <property type="entry name" value="CHAPERONINS_CPN10"/>
    <property type="match status" value="1"/>
</dbReference>
<reference key="1">
    <citation type="submission" date="2008-04" db="EMBL/GenBank/DDBJ databases">
        <title>Complete sequence of Yersinia pseudotuberculosis PB1/+.</title>
        <authorList>
            <person name="Copeland A."/>
            <person name="Lucas S."/>
            <person name="Lapidus A."/>
            <person name="Glavina del Rio T."/>
            <person name="Dalin E."/>
            <person name="Tice H."/>
            <person name="Bruce D."/>
            <person name="Goodwin L."/>
            <person name="Pitluck S."/>
            <person name="Munk A.C."/>
            <person name="Brettin T."/>
            <person name="Detter J.C."/>
            <person name="Han C."/>
            <person name="Tapia R."/>
            <person name="Schmutz J."/>
            <person name="Larimer F."/>
            <person name="Land M."/>
            <person name="Hauser L."/>
            <person name="Challacombe J.F."/>
            <person name="Green L."/>
            <person name="Lindler L.E."/>
            <person name="Nikolich M.P."/>
            <person name="Richardson P."/>
        </authorList>
    </citation>
    <scope>NUCLEOTIDE SEQUENCE [LARGE SCALE GENOMIC DNA]</scope>
    <source>
        <strain>PB1/+</strain>
    </source>
</reference>
<accession>B2K1Y3</accession>
<evidence type="ECO:0000255" key="1">
    <source>
        <dbReference type="HAMAP-Rule" id="MF_00580"/>
    </source>
</evidence>
<name>CH10_YERPB</name>
<proteinExistence type="inferred from homology"/>
<sequence>MKIRPLHDRVIVKRKEVESKSAGGIVLTGTAAGKSTRGEVLAVGNGRILDNGEIKPLDVKVGDVVIFNDGYGVKAEKIDNEEVLIMSESDILAIVEA</sequence>
<organism>
    <name type="scientific">Yersinia pseudotuberculosis serotype IB (strain PB1/+)</name>
    <dbReference type="NCBI Taxonomy" id="502801"/>
    <lineage>
        <taxon>Bacteria</taxon>
        <taxon>Pseudomonadati</taxon>
        <taxon>Pseudomonadota</taxon>
        <taxon>Gammaproteobacteria</taxon>
        <taxon>Enterobacterales</taxon>
        <taxon>Yersiniaceae</taxon>
        <taxon>Yersinia</taxon>
    </lineage>
</organism>